<dbReference type="EC" id="2.7.7.7"/>
<dbReference type="EMBL" id="L43967">
    <property type="protein sequence ID" value="AAC71482.1"/>
    <property type="molecule type" value="Genomic_DNA"/>
</dbReference>
<dbReference type="PIR" id="H64228">
    <property type="entry name" value="H64228"/>
</dbReference>
<dbReference type="RefSeq" id="WP_009885893.1">
    <property type="nucleotide sequence ID" value="NC_000908.2"/>
</dbReference>
<dbReference type="SMR" id="Q49405"/>
<dbReference type="FunCoup" id="Q49405">
    <property type="interactions" value="125"/>
</dbReference>
<dbReference type="STRING" id="243273.MG_261"/>
<dbReference type="GeneID" id="88282415"/>
<dbReference type="KEGG" id="mge:MG_261"/>
<dbReference type="eggNOG" id="COG0587">
    <property type="taxonomic scope" value="Bacteria"/>
</dbReference>
<dbReference type="HOGENOM" id="CLU_001600_0_1_14"/>
<dbReference type="InParanoid" id="Q49405"/>
<dbReference type="OrthoDB" id="9803237at2"/>
<dbReference type="BioCyc" id="MGEN243273:G1GJ2-316-MONOMER"/>
<dbReference type="Proteomes" id="UP000000807">
    <property type="component" value="Chromosome"/>
</dbReference>
<dbReference type="GO" id="GO:0005737">
    <property type="term" value="C:cytoplasm"/>
    <property type="evidence" value="ECO:0007669"/>
    <property type="project" value="UniProtKB-SubCell"/>
</dbReference>
<dbReference type="GO" id="GO:0008408">
    <property type="term" value="F:3'-5' exonuclease activity"/>
    <property type="evidence" value="ECO:0007669"/>
    <property type="project" value="InterPro"/>
</dbReference>
<dbReference type="GO" id="GO:0003887">
    <property type="term" value="F:DNA-directed DNA polymerase activity"/>
    <property type="evidence" value="ECO:0000318"/>
    <property type="project" value="GO_Central"/>
</dbReference>
<dbReference type="GO" id="GO:0006260">
    <property type="term" value="P:DNA replication"/>
    <property type="evidence" value="ECO:0007669"/>
    <property type="project" value="UniProtKB-KW"/>
</dbReference>
<dbReference type="CDD" id="cd07431">
    <property type="entry name" value="PHP_PolIIIA"/>
    <property type="match status" value="1"/>
</dbReference>
<dbReference type="Gene3D" id="3.20.20.140">
    <property type="entry name" value="Metal-dependent hydrolases"/>
    <property type="match status" value="1"/>
</dbReference>
<dbReference type="InterPro" id="IPR011708">
    <property type="entry name" value="DNA_pol3_alpha_NTPase_dom"/>
</dbReference>
<dbReference type="InterPro" id="IPR040982">
    <property type="entry name" value="DNA_pol3_finger"/>
</dbReference>
<dbReference type="InterPro" id="IPR004805">
    <property type="entry name" value="DnaE2/DnaE/PolC"/>
</dbReference>
<dbReference type="InterPro" id="IPR029460">
    <property type="entry name" value="DNAPol_HHH"/>
</dbReference>
<dbReference type="InterPro" id="IPR004013">
    <property type="entry name" value="PHP_dom"/>
</dbReference>
<dbReference type="InterPro" id="IPR003141">
    <property type="entry name" value="Pol/His_phosphatase_N"/>
</dbReference>
<dbReference type="InterPro" id="IPR016195">
    <property type="entry name" value="Pol/histidinol_Pase-like"/>
</dbReference>
<dbReference type="NCBIfam" id="TIGR00594">
    <property type="entry name" value="polc"/>
    <property type="match status" value="1"/>
</dbReference>
<dbReference type="PANTHER" id="PTHR32294">
    <property type="entry name" value="DNA POLYMERASE III SUBUNIT ALPHA"/>
    <property type="match status" value="1"/>
</dbReference>
<dbReference type="PANTHER" id="PTHR32294:SF0">
    <property type="entry name" value="DNA POLYMERASE III SUBUNIT ALPHA"/>
    <property type="match status" value="1"/>
</dbReference>
<dbReference type="Pfam" id="PF07733">
    <property type="entry name" value="DNA_pol3_alpha"/>
    <property type="match status" value="1"/>
</dbReference>
<dbReference type="Pfam" id="PF17657">
    <property type="entry name" value="DNA_pol3_finger"/>
    <property type="match status" value="1"/>
</dbReference>
<dbReference type="Pfam" id="PF14579">
    <property type="entry name" value="HHH_6"/>
    <property type="match status" value="1"/>
</dbReference>
<dbReference type="Pfam" id="PF02811">
    <property type="entry name" value="PHP"/>
    <property type="match status" value="1"/>
</dbReference>
<dbReference type="SMART" id="SM00481">
    <property type="entry name" value="POLIIIAc"/>
    <property type="match status" value="1"/>
</dbReference>
<dbReference type="SUPFAM" id="SSF89550">
    <property type="entry name" value="PHP domain-like"/>
    <property type="match status" value="1"/>
</dbReference>
<protein>
    <recommendedName>
        <fullName>DNA polymerase III subunit alpha</fullName>
        <ecNumber>2.7.7.7</ecNumber>
    </recommendedName>
</protein>
<reference key="1">
    <citation type="journal article" date="1995" name="Science">
        <title>The minimal gene complement of Mycoplasma genitalium.</title>
        <authorList>
            <person name="Fraser C.M."/>
            <person name="Gocayne J.D."/>
            <person name="White O."/>
            <person name="Adams M.D."/>
            <person name="Clayton R.A."/>
            <person name="Fleischmann R.D."/>
            <person name="Bult C.J."/>
            <person name="Kerlavage A.R."/>
            <person name="Sutton G.G."/>
            <person name="Kelley J.M."/>
            <person name="Fritchman J.L."/>
            <person name="Weidman J.F."/>
            <person name="Small K.V."/>
            <person name="Sandusky M."/>
            <person name="Fuhrmann J.L."/>
            <person name="Nguyen D.T."/>
            <person name="Utterback T.R."/>
            <person name="Saudek D.M."/>
            <person name="Phillips C.A."/>
            <person name="Merrick J.M."/>
            <person name="Tomb J.-F."/>
            <person name="Dougherty B.A."/>
            <person name="Bott K.F."/>
            <person name="Hu P.-C."/>
            <person name="Lucier T.S."/>
            <person name="Peterson S.N."/>
            <person name="Smith H.O."/>
            <person name="Hutchison C.A. III"/>
            <person name="Venter J.C."/>
        </authorList>
    </citation>
    <scope>NUCLEOTIDE SEQUENCE [LARGE SCALE GENOMIC DNA]</scope>
    <source>
        <strain>ATCC 33530 / DSM 19775 / NCTC 10195 / G37</strain>
    </source>
</reference>
<sequence length="874" mass="100435">MFVNLHTNSYYNFLNSALSPKKLVNLAINDQQKAVAITDPNLFGAVEFFITCKQNNIKPIIGLNLTVEYQKNDVKLLLIAKSNKGFQTLNKIALIQQKLEINSLVDQLTDIAVIICSLTTWKSTYKDVYQAKGIEINQTPIAILANAVNCEKTNSDQVVLTVLKQMKQNQTGKITTFDWDLKQKLNQISINENLKVKSEIQPFLDQKTAQQLFSETELNNLNDLVNRCELDLEHLKAASLSLTDNDAAVLESLCQTNLKQFLDKNQDLNKKAYQLRLEKELNVINKLNFASYFLVVNDLVNYAFKKDILIGSGRGSAVGSLVAFLLNITKIDPVQHQLIFERFISTHRQDLPDIDIDIMENKRAEMINYLFEKYGKENCAQIVTFQRFKTRSAVKEVAKLFNDYGISDMILGVLPKDQTITFTDLKATEDSALQLCLQQFGLIVELALAIVDFPRQSSIHASGIVIASNSLIKTIPLLQLDNNHFLTQVSMEWLSFFNLNKFDLLGLINLTMISDVITQIKPSNQTVNQFLNTISWTDQNTFINLVNEDTLGIFQLESFGMKKLLVQIKPKTINQLAIVLALYRPGAQDNINLFINRLHNGYDQSDIDPRILPIVKNTYGVLIFQEQIINIVKVVANYSLEEADSFRRAISKKDVKLIQKNKRNFFERAVQNNFDLKTTTKIFSYIERFANYGFNLSHALGYALLSYWTAWLKTNYPVYFYLWLLNHFQSSKDKQKLIIRTLEKSGIEIYPPLLNKAQPNSVIENKKIYLGLNLIKGINDRYIQNLQKVQHLIQTQNNLQLTDVVSWCLDKTIGDIPLKDLLLLKTMGCFDFFEYTYDFNDAKDFWIKSDHLLFTRMPLEKKDSNFWIKQFFTN</sequence>
<organism>
    <name type="scientific">Mycoplasma genitalium (strain ATCC 33530 / DSM 19775 / NCTC 10195 / G37)</name>
    <name type="common">Mycoplasmoides genitalium</name>
    <dbReference type="NCBI Taxonomy" id="243273"/>
    <lineage>
        <taxon>Bacteria</taxon>
        <taxon>Bacillati</taxon>
        <taxon>Mycoplasmatota</taxon>
        <taxon>Mycoplasmoidales</taxon>
        <taxon>Mycoplasmoidaceae</taxon>
        <taxon>Mycoplasmoides</taxon>
    </lineage>
</organism>
<gene>
    <name type="primary">dnaE</name>
    <name type="ordered locus">MG261</name>
</gene>
<accession>Q49405</accession>
<keyword id="KW-0963">Cytoplasm</keyword>
<keyword id="KW-0235">DNA replication</keyword>
<keyword id="KW-0239">DNA-directed DNA polymerase</keyword>
<keyword id="KW-0548">Nucleotidyltransferase</keyword>
<keyword id="KW-1185">Reference proteome</keyword>
<keyword id="KW-0808">Transferase</keyword>
<comment type="function">
    <text evidence="1">DNA polymerase III is a complex, multichain enzyme responsible for most of the replicative synthesis in bacteria. This DNA polymerase also exhibits 3' to 5' exonuclease activity. The alpha chain is the DNA polymerase (By similarity).</text>
</comment>
<comment type="catalytic activity">
    <reaction>
        <text>DNA(n) + a 2'-deoxyribonucleoside 5'-triphosphate = DNA(n+1) + diphosphate</text>
        <dbReference type="Rhea" id="RHEA:22508"/>
        <dbReference type="Rhea" id="RHEA-COMP:17339"/>
        <dbReference type="Rhea" id="RHEA-COMP:17340"/>
        <dbReference type="ChEBI" id="CHEBI:33019"/>
        <dbReference type="ChEBI" id="CHEBI:61560"/>
        <dbReference type="ChEBI" id="CHEBI:173112"/>
        <dbReference type="EC" id="2.7.7.7"/>
    </reaction>
</comment>
<comment type="subunit">
    <text evidence="1">DNA polymerase III contains a core (composed of alpha, epsilon and theta chains) that associates with a tau subunit. This core dimerizes to form the PolIII' complex. PolIII' associates with the gamma complex (composed of gamma, delta, delta', psi and chi chains) and with the beta chain to form the complete DNA polymerase III complex (By similarity).</text>
</comment>
<comment type="subcellular location">
    <subcellularLocation>
        <location evidence="1">Cytoplasm</location>
    </subcellularLocation>
</comment>
<comment type="similarity">
    <text evidence="2">Belongs to the DNA polymerase type-C family. DnaE subfamily.</text>
</comment>
<name>DPO3A_MYCGE</name>
<evidence type="ECO:0000250" key="1"/>
<evidence type="ECO:0000305" key="2"/>
<proteinExistence type="inferred from homology"/>
<feature type="chain" id="PRO_0000103326" description="DNA polymerase III subunit alpha">
    <location>
        <begin position="1"/>
        <end position="874"/>
    </location>
</feature>